<keyword id="KW-0249">Electron transport</keyword>
<keyword id="KW-0349">Heme</keyword>
<keyword id="KW-0408">Iron</keyword>
<keyword id="KW-0472">Membrane</keyword>
<keyword id="KW-0479">Metal-binding</keyword>
<keyword id="KW-0602">Photosynthesis</keyword>
<keyword id="KW-1185">Reference proteome</keyword>
<keyword id="KW-0732">Signal</keyword>
<keyword id="KW-0793">Thylakoid</keyword>
<keyword id="KW-0812">Transmembrane</keyword>
<keyword id="KW-1133">Transmembrane helix</keyword>
<keyword id="KW-0813">Transport</keyword>
<reference key="1">
    <citation type="journal article" date="1992" name="Plant Mol. Biol.">
        <title>Cloning and sequencing of the petBD operon from the cyanobacterium Synechococcus sp. PCC 7002.</title>
        <authorList>
            <person name="Brand S.N."/>
            <person name="Tan X."/>
            <person name="Widger W.R."/>
        </authorList>
    </citation>
    <scope>NUCLEOTIDE SEQUENCE [GENOMIC DNA]</scope>
</reference>
<reference key="2">
    <citation type="submission" date="2008-02" db="EMBL/GenBank/DDBJ databases">
        <title>Complete sequence of Synechococcus sp. PCC 7002.</title>
        <authorList>
            <person name="Li T."/>
            <person name="Zhao J."/>
            <person name="Zhao C."/>
            <person name="Liu Z."/>
            <person name="Zhao F."/>
            <person name="Marquardt J."/>
            <person name="Nomura C.T."/>
            <person name="Persson S."/>
            <person name="Detter J.C."/>
            <person name="Richardson P.M."/>
            <person name="Lanz C."/>
            <person name="Schuster S.C."/>
            <person name="Wang J."/>
            <person name="Li S."/>
            <person name="Huang X."/>
            <person name="Cai T."/>
            <person name="Yu Z."/>
            <person name="Luo J."/>
            <person name="Zhao J."/>
            <person name="Bryant D.A."/>
        </authorList>
    </citation>
    <scope>NUCLEOTIDE SEQUENCE [LARGE SCALE GENOMIC DNA]</scope>
    <source>
        <strain>ATCC 27264 / PCC 7002 / PR-6</strain>
    </source>
</reference>
<sequence length="325" mass="34875">MKTPELMAIWQRLKTACLVAIATFGLFFASDVLFPQAAAAYPFWAQQTAPETPREATGRIVCANCHLAAKEAEVEIPQSVLPDQVFEAVVKIPYDHSQQQVLGDGSKGGLNVGAVLMLPDGFKIAPADRLSDELKEKTEGLYFQSYAPDQENVVIIGPISGDQYEEIVFPVLSPDPKTDKNINYGKYAVHLGANRGRGQVYPTGELSNNNQFKASATGTITNIAVNEAAGTDITISTEAGEVIDTIPAGPEVIVSEGQAIAAGEALTNNPNVGGFGQKDTEVVLQNPARIYGYMAFVAGIMLTQIFLVLKKKQVERVQAAGQLDF</sequence>
<dbReference type="EMBL" id="M74514">
    <property type="protein sequence ID" value="AAA22070.1"/>
    <property type="molecule type" value="Genomic_DNA"/>
</dbReference>
<dbReference type="EMBL" id="CP000951">
    <property type="protein sequence ID" value="ACA99897.1"/>
    <property type="molecule type" value="Genomic_DNA"/>
</dbReference>
<dbReference type="RefSeq" id="WP_012307520.1">
    <property type="nucleotide sequence ID" value="NZ_JAHHPU010000002.1"/>
</dbReference>
<dbReference type="SMR" id="P26293"/>
<dbReference type="STRING" id="32049.SYNPCC7002_A1910"/>
<dbReference type="KEGG" id="syp:SYNPCC7002_A1910"/>
<dbReference type="eggNOG" id="COG3258">
    <property type="taxonomic scope" value="Bacteria"/>
</dbReference>
<dbReference type="HOGENOM" id="CLU_033498_0_0_3"/>
<dbReference type="Proteomes" id="UP000001688">
    <property type="component" value="Chromosome"/>
</dbReference>
<dbReference type="GO" id="GO:0031676">
    <property type="term" value="C:plasma membrane-derived thylakoid membrane"/>
    <property type="evidence" value="ECO:0007669"/>
    <property type="project" value="UniProtKB-SubCell"/>
</dbReference>
<dbReference type="GO" id="GO:0009055">
    <property type="term" value="F:electron transfer activity"/>
    <property type="evidence" value="ECO:0007669"/>
    <property type="project" value="UniProtKB-UniRule"/>
</dbReference>
<dbReference type="GO" id="GO:0020037">
    <property type="term" value="F:heme binding"/>
    <property type="evidence" value="ECO:0007669"/>
    <property type="project" value="InterPro"/>
</dbReference>
<dbReference type="GO" id="GO:0005506">
    <property type="term" value="F:iron ion binding"/>
    <property type="evidence" value="ECO:0007669"/>
    <property type="project" value="InterPro"/>
</dbReference>
<dbReference type="GO" id="GO:0015979">
    <property type="term" value="P:photosynthesis"/>
    <property type="evidence" value="ECO:0007669"/>
    <property type="project" value="UniProtKB-UniRule"/>
</dbReference>
<dbReference type="FunFam" id="2.60.40.830:FF:000001">
    <property type="entry name" value="Cytochrome f"/>
    <property type="match status" value="1"/>
</dbReference>
<dbReference type="Gene3D" id="2.40.50.100">
    <property type="match status" value="1"/>
</dbReference>
<dbReference type="Gene3D" id="2.60.40.830">
    <property type="entry name" value="Cytochrome f large domain"/>
    <property type="match status" value="1"/>
</dbReference>
<dbReference type="Gene3D" id="1.20.5.700">
    <property type="entry name" value="Single helix bin"/>
    <property type="match status" value="1"/>
</dbReference>
<dbReference type="HAMAP" id="MF_00610">
    <property type="entry name" value="Cytb6_f_cytF"/>
    <property type="match status" value="1"/>
</dbReference>
<dbReference type="InterPro" id="IPR024058">
    <property type="entry name" value="Cyt-f_TM"/>
</dbReference>
<dbReference type="InterPro" id="IPR002325">
    <property type="entry name" value="Cyt_f"/>
</dbReference>
<dbReference type="InterPro" id="IPR024094">
    <property type="entry name" value="Cyt_f_lg_dom"/>
</dbReference>
<dbReference type="InterPro" id="IPR036826">
    <property type="entry name" value="Cyt_f_lg_dom_sf"/>
</dbReference>
<dbReference type="InterPro" id="IPR011054">
    <property type="entry name" value="Rudment_hybrid_motif"/>
</dbReference>
<dbReference type="NCBIfam" id="NF002736">
    <property type="entry name" value="PRK02693.1"/>
    <property type="match status" value="1"/>
</dbReference>
<dbReference type="PANTHER" id="PTHR33288">
    <property type="match status" value="1"/>
</dbReference>
<dbReference type="PANTHER" id="PTHR33288:SF10">
    <property type="entry name" value="CYTOCHROME F"/>
    <property type="match status" value="1"/>
</dbReference>
<dbReference type="Pfam" id="PF01333">
    <property type="entry name" value="Apocytochr_F_C"/>
    <property type="match status" value="1"/>
</dbReference>
<dbReference type="Pfam" id="PF16639">
    <property type="entry name" value="Apocytochr_F_N"/>
    <property type="match status" value="1"/>
</dbReference>
<dbReference type="PRINTS" id="PR00610">
    <property type="entry name" value="CYTOCHROMEF"/>
</dbReference>
<dbReference type="SUPFAM" id="SSF103431">
    <property type="entry name" value="Cytochrome f subunit of the cytochrome b6f complex, transmembrane anchor"/>
    <property type="match status" value="1"/>
</dbReference>
<dbReference type="SUPFAM" id="SSF49441">
    <property type="entry name" value="Cytochrome f, large domain"/>
    <property type="match status" value="1"/>
</dbReference>
<dbReference type="SUPFAM" id="SSF51246">
    <property type="entry name" value="Rudiment single hybrid motif"/>
    <property type="match status" value="1"/>
</dbReference>
<dbReference type="PROSITE" id="PS51010">
    <property type="entry name" value="CYTF"/>
    <property type="match status" value="1"/>
</dbReference>
<protein>
    <recommendedName>
        <fullName>Cytochrome f</fullName>
    </recommendedName>
</protein>
<proteinExistence type="inferred from homology"/>
<evidence type="ECO:0000250" key="1"/>
<evidence type="ECO:0000255" key="2"/>
<evidence type="ECO:0000305" key="3"/>
<name>CYF_PICP2</name>
<accession>P26293</accession>
<accession>B1XQK2</accession>
<organism>
    <name type="scientific">Picosynechococcus sp. (strain ATCC 27264 / PCC 7002 / PR-6)</name>
    <name type="common">Agmenellum quadruplicatum</name>
    <dbReference type="NCBI Taxonomy" id="32049"/>
    <lineage>
        <taxon>Bacteria</taxon>
        <taxon>Bacillati</taxon>
        <taxon>Cyanobacteriota</taxon>
        <taxon>Cyanophyceae</taxon>
        <taxon>Oscillatoriophycideae</taxon>
        <taxon>Chroococcales</taxon>
        <taxon>Geminocystaceae</taxon>
        <taxon>Picosynechococcus</taxon>
    </lineage>
</organism>
<feature type="signal peptide" evidence="1">
    <location>
        <begin position="1"/>
        <end position="40"/>
    </location>
</feature>
<feature type="chain" id="PRO_0000023847" description="Cytochrome f">
    <location>
        <begin position="41"/>
        <end position="325"/>
    </location>
</feature>
<feature type="transmembrane region" description="Helical" evidence="2">
    <location>
        <begin position="290"/>
        <end position="309"/>
    </location>
</feature>
<feature type="binding site" description="axial binding residue" evidence="1">
    <location>
        <position position="41"/>
    </location>
    <ligand>
        <name>heme</name>
        <dbReference type="ChEBI" id="CHEBI:30413"/>
    </ligand>
    <ligandPart>
        <name>Fe</name>
        <dbReference type="ChEBI" id="CHEBI:18248"/>
    </ligandPart>
</feature>
<feature type="binding site" description="covalent" evidence="1">
    <location>
        <position position="62"/>
    </location>
    <ligand>
        <name>heme</name>
        <dbReference type="ChEBI" id="CHEBI:30413"/>
    </ligand>
</feature>
<feature type="binding site" description="covalent" evidence="1">
    <location>
        <position position="65"/>
    </location>
    <ligand>
        <name>heme</name>
        <dbReference type="ChEBI" id="CHEBI:30413"/>
    </ligand>
</feature>
<feature type="binding site" description="axial binding residue" evidence="1">
    <location>
        <position position="66"/>
    </location>
    <ligand>
        <name>heme</name>
        <dbReference type="ChEBI" id="CHEBI:30413"/>
    </ligand>
    <ligandPart>
        <name>Fe</name>
        <dbReference type="ChEBI" id="CHEBI:18248"/>
    </ligandPart>
</feature>
<feature type="sequence conflict" description="In Ref. 1; AAA22070." evidence="3" ref="1">
    <original>QL</original>
    <variation>NC</variation>
    <location>
        <begin position="322"/>
        <end position="323"/>
    </location>
</feature>
<gene>
    <name type="primary">petA</name>
    <name type="ordered locus">SYNPCC7002_A1910</name>
</gene>
<comment type="function">
    <text evidence="1">Component of the cytochrome b6-f complex, which mediates electron transfer between photosystem II (PSII) and photosystem I (PSI), cyclic electron flow around PSI, and state transitions.</text>
</comment>
<comment type="cofactor">
    <cofactor evidence="1">
        <name>heme</name>
        <dbReference type="ChEBI" id="CHEBI:30413"/>
    </cofactor>
    <text evidence="1">Binds 1 heme group covalently.</text>
</comment>
<comment type="subunit">
    <text evidence="1">The 4 large subunits of the cytochrome b6-f complex are cytochrome b6, subunit IV (17 kDa polypeptide, PetD), cytochrome f and the Rieske protein, while the 4 small subunits are PetG, PetL, PetM and PetN. The complex functions as a dimer (By similarity).</text>
</comment>
<comment type="subcellular location">
    <subcellularLocation>
        <location evidence="1">Cellular thylakoid membrane</location>
        <topology evidence="1">Single-pass membrane protein</topology>
    </subcellularLocation>
</comment>
<comment type="similarity">
    <text evidence="3">Belongs to the cytochrome f family.</text>
</comment>